<feature type="chain" id="PRO_0000351031" description="DNA-directed RNA polymerase III subunit RPC3">
    <location>
        <begin position="1"/>
        <end position="628"/>
    </location>
</feature>
<feature type="region of interest" description="Disordered" evidence="2">
    <location>
        <begin position="360"/>
        <end position="422"/>
    </location>
</feature>
<feature type="region of interest" description="Leucine-zipper">
    <location>
        <begin position="555"/>
        <end position="576"/>
    </location>
</feature>
<feature type="compositionally biased region" description="Acidic residues" evidence="2">
    <location>
        <begin position="360"/>
        <end position="383"/>
    </location>
</feature>
<feature type="compositionally biased region" description="Low complexity" evidence="2">
    <location>
        <begin position="390"/>
        <end position="406"/>
    </location>
</feature>
<feature type="compositionally biased region" description="Basic and acidic residues" evidence="2">
    <location>
        <begin position="408"/>
        <end position="422"/>
    </location>
</feature>
<keyword id="KW-0240">DNA-directed RNA polymerase</keyword>
<keyword id="KW-0539">Nucleus</keyword>
<keyword id="KW-1185">Reference proteome</keyword>
<keyword id="KW-0804">Transcription</keyword>
<keyword id="KW-0862">Zinc</keyword>
<protein>
    <recommendedName>
        <fullName>DNA-directed RNA polymerase III subunit RPC3</fullName>
        <shortName>RNA polymerase III subunit C3</shortName>
    </recommendedName>
</protein>
<gene>
    <name type="primary">RPC82</name>
    <name type="synonym">RPC3</name>
    <name type="ORF">CHGG_08238</name>
</gene>
<organism>
    <name type="scientific">Chaetomium globosum (strain ATCC 6205 / CBS 148.51 / DSM 1962 / NBRC 6347 / NRRL 1970)</name>
    <name type="common">Soil fungus</name>
    <dbReference type="NCBI Taxonomy" id="306901"/>
    <lineage>
        <taxon>Eukaryota</taxon>
        <taxon>Fungi</taxon>
        <taxon>Dikarya</taxon>
        <taxon>Ascomycota</taxon>
        <taxon>Pezizomycotina</taxon>
        <taxon>Sordariomycetes</taxon>
        <taxon>Sordariomycetidae</taxon>
        <taxon>Sordariales</taxon>
        <taxon>Chaetomiaceae</taxon>
        <taxon>Chaetomium</taxon>
    </lineage>
</organism>
<sequence>MTPRQVRHGLAVLQQHNLLFYHTDPGAEFASYEANPDNAYNLVRTGKILEMIDTSFGAPAKDVMQSLLLSGQTRVSDLVAAYKEKIEQGNQTESTVGDDNDFGIEANGVNGDSKADKKAGPLIKSTAHLNTIICRLVEAELIDVVHPKTFESSEDILKTVEKEVMQKHFPAGVKGNKAKVELQERIAEGLRKVRGESKSLKRKLEQNGSAAKRRKLLAGFGMANGAHDEDMDPALDPRQVIRINYEKCLVDLRNRRLVQYATDMTGETTAYVYGVLLKLLTKDLSRCRADLVMDAVGDKDEEDDKGPGSVTTDQILDNLKTSVDLSLGIGKAERGQVSSTAAEKIELYPPKKKVLIEEAEVDGEASADEDEGEDESSEESDYDSDYKASTTHGTNGVNGTNGTNGTKVKFDESAAPKERRMDRPAQLRQHLLMLAESTQHFVRHCGPNEWTVDFVPVMKSLREAELDSVIERTCGRQGLRLVRILRAKGKLDEKALPNVALMRKPELQQKMLEMQTAGFVSVQEVPRDLKADVKKSFFLWFCDMDSSLSRLLDTGYVTMVHCLQVLEALRRKERDVLETTKRTDVRGREKDTMRKSYYERYSRFLESERKLFAQVMRVDDLVSVLRDF</sequence>
<proteinExistence type="inferred from homology"/>
<name>RPC3_CHAGB</name>
<evidence type="ECO:0000250" key="1"/>
<evidence type="ECO:0000256" key="2">
    <source>
        <dbReference type="SAM" id="MobiDB-lite"/>
    </source>
</evidence>
<evidence type="ECO:0000305" key="3"/>
<reference key="1">
    <citation type="journal article" date="2015" name="Genome Announc.">
        <title>Draft genome sequence of the cellulolytic fungus Chaetomium globosum.</title>
        <authorList>
            <person name="Cuomo C.A."/>
            <person name="Untereiner W.A."/>
            <person name="Ma L.-J."/>
            <person name="Grabherr M."/>
            <person name="Birren B.W."/>
        </authorList>
    </citation>
    <scope>NUCLEOTIDE SEQUENCE [LARGE SCALE GENOMIC DNA]</scope>
    <source>
        <strain>ATCC 6205 / CBS 148.51 / DSM 1962 / NBRC 6347 / NRRL 1970</strain>
    </source>
</reference>
<dbReference type="EMBL" id="CH408033">
    <property type="protein sequence ID" value="EAQ86985.1"/>
    <property type="molecule type" value="Genomic_DNA"/>
</dbReference>
<dbReference type="RefSeq" id="XP_001225894.1">
    <property type="nucleotide sequence ID" value="XM_001225893.1"/>
</dbReference>
<dbReference type="SMR" id="Q2GUW6"/>
<dbReference type="FunCoup" id="Q2GUW6">
    <property type="interactions" value="408"/>
</dbReference>
<dbReference type="STRING" id="306901.Q2GUW6"/>
<dbReference type="GeneID" id="4393570"/>
<dbReference type="VEuPathDB" id="FungiDB:CHGG_08238"/>
<dbReference type="eggNOG" id="KOG2587">
    <property type="taxonomic scope" value="Eukaryota"/>
</dbReference>
<dbReference type="HOGENOM" id="CLU_023294_0_0_1"/>
<dbReference type="InParanoid" id="Q2GUW6"/>
<dbReference type="OMA" id="KHRFVRH"/>
<dbReference type="OrthoDB" id="272392at2759"/>
<dbReference type="Proteomes" id="UP000001056">
    <property type="component" value="Unassembled WGS sequence"/>
</dbReference>
<dbReference type="GO" id="GO:0005666">
    <property type="term" value="C:RNA polymerase III complex"/>
    <property type="evidence" value="ECO:0007669"/>
    <property type="project" value="InterPro"/>
</dbReference>
<dbReference type="GO" id="GO:0003697">
    <property type="term" value="F:single-stranded DNA binding"/>
    <property type="evidence" value="ECO:0007669"/>
    <property type="project" value="InterPro"/>
</dbReference>
<dbReference type="GO" id="GO:0006351">
    <property type="term" value="P:DNA-templated transcription"/>
    <property type="evidence" value="ECO:0007669"/>
    <property type="project" value="InterPro"/>
</dbReference>
<dbReference type="Gene3D" id="1.10.10.10">
    <property type="entry name" value="Winged helix-like DNA-binding domain superfamily/Winged helix DNA-binding domain"/>
    <property type="match status" value="2"/>
</dbReference>
<dbReference type="InterPro" id="IPR055207">
    <property type="entry name" value="POLR3C_WHD"/>
</dbReference>
<dbReference type="InterPro" id="IPR008806">
    <property type="entry name" value="RNA_pol_III_Rpc82_C"/>
</dbReference>
<dbReference type="InterPro" id="IPR039748">
    <property type="entry name" value="RPC3"/>
</dbReference>
<dbReference type="InterPro" id="IPR036388">
    <property type="entry name" value="WH-like_DNA-bd_sf"/>
</dbReference>
<dbReference type="PANTHER" id="PTHR12949:SF0">
    <property type="entry name" value="DNA-DIRECTED RNA POLYMERASE III SUBUNIT RPC3"/>
    <property type="match status" value="1"/>
</dbReference>
<dbReference type="PANTHER" id="PTHR12949">
    <property type="entry name" value="RNA POLYMERASE III DNA DIRECTED -RELATED"/>
    <property type="match status" value="1"/>
</dbReference>
<dbReference type="Pfam" id="PF22536">
    <property type="entry name" value="POLR3C_WHD"/>
    <property type="match status" value="1"/>
</dbReference>
<dbReference type="Pfam" id="PF05645">
    <property type="entry name" value="RNA_pol_Rpc82"/>
    <property type="match status" value="1"/>
</dbReference>
<accession>Q2GUW6</accession>
<comment type="function">
    <text evidence="1">DNA-dependent RNA polymerase catalyzes the transcription of DNA into RNA using the four ribonucleoside triphosphates as substrates. Specific core component of RNA polymerase III which synthesizes small RNAs, such as 5S rRNA and tRNAs (By similarity).</text>
</comment>
<comment type="subunit">
    <text evidence="1">Component of the RNA polymerase III (Pol III) complex consisting of 17 subunits.</text>
</comment>
<comment type="subcellular location">
    <subcellularLocation>
        <location evidence="1">Nucleus</location>
    </subcellularLocation>
</comment>
<comment type="similarity">
    <text evidence="3">Belongs to the RNA polymerase beta chain family.</text>
</comment>